<evidence type="ECO:0000255" key="1">
    <source>
        <dbReference type="HAMAP-Rule" id="MF_01039"/>
    </source>
</evidence>
<name>GPMA_STRZJ</name>
<sequence length="230" mass="26051">MVKLVFARHGESEWNKANLFTGWADVDLSEKGTQQAIDAGKLIKEAGIEFDQAYTSVLKRAIKTTNLALEASDQLWVPVEKSWRLNERHYGGLTGKNKAEAAEQFGDEQVHIWRRSYDVLPPNMDRDDEHSAHTDRRYASLDDSVIPDAENLKVTLERALPFWEDKIAPALKDGKNVFVGAHGNSIRALVKHIKGLSDDEIMDVEIPNFPPLVFEFDEKLNVVSEYYLGK</sequence>
<comment type="function">
    <text evidence="1">Catalyzes the interconversion of 2-phosphoglycerate and 3-phosphoglycerate.</text>
</comment>
<comment type="catalytic activity">
    <reaction evidence="1">
        <text>(2R)-2-phosphoglycerate = (2R)-3-phosphoglycerate</text>
        <dbReference type="Rhea" id="RHEA:15901"/>
        <dbReference type="ChEBI" id="CHEBI:58272"/>
        <dbReference type="ChEBI" id="CHEBI:58289"/>
        <dbReference type="EC" id="5.4.2.11"/>
    </reaction>
</comment>
<comment type="pathway">
    <text evidence="1">Carbohydrate degradation; glycolysis; pyruvate from D-glyceraldehyde 3-phosphate: step 3/5.</text>
</comment>
<comment type="similarity">
    <text evidence="1">Belongs to the phosphoglycerate mutase family. BPG-dependent PGAM subfamily.</text>
</comment>
<accession>C1CFM7</accession>
<feature type="chain" id="PRO_1000149535" description="2,3-bisphosphoglycerate-dependent phosphoglycerate mutase">
    <location>
        <begin position="1"/>
        <end position="230"/>
    </location>
</feature>
<feature type="active site" description="Tele-phosphohistidine intermediate" evidence="1">
    <location>
        <position position="9"/>
    </location>
</feature>
<feature type="active site" description="Proton donor/acceptor" evidence="1">
    <location>
        <position position="87"/>
    </location>
</feature>
<feature type="binding site" evidence="1">
    <location>
        <begin position="8"/>
        <end position="15"/>
    </location>
    <ligand>
        <name>substrate</name>
    </ligand>
</feature>
<feature type="binding site" evidence="1">
    <location>
        <begin position="21"/>
        <end position="22"/>
    </location>
    <ligand>
        <name>substrate</name>
    </ligand>
</feature>
<feature type="binding site" evidence="1">
    <location>
        <position position="60"/>
    </location>
    <ligand>
        <name>substrate</name>
    </ligand>
</feature>
<feature type="binding site" evidence="1">
    <location>
        <begin position="87"/>
        <end position="90"/>
    </location>
    <ligand>
        <name>substrate</name>
    </ligand>
</feature>
<feature type="binding site" evidence="1">
    <location>
        <position position="98"/>
    </location>
    <ligand>
        <name>substrate</name>
    </ligand>
</feature>
<feature type="binding site" evidence="1">
    <location>
        <begin position="114"/>
        <end position="115"/>
    </location>
    <ligand>
        <name>substrate</name>
    </ligand>
</feature>
<feature type="binding site" evidence="1">
    <location>
        <begin position="183"/>
        <end position="184"/>
    </location>
    <ligand>
        <name>substrate</name>
    </ligand>
</feature>
<feature type="site" description="Transition state stabilizer" evidence="1">
    <location>
        <position position="182"/>
    </location>
</feature>
<reference key="1">
    <citation type="journal article" date="2010" name="Genome Biol.">
        <title>Structure and dynamics of the pan-genome of Streptococcus pneumoniae and closely related species.</title>
        <authorList>
            <person name="Donati C."/>
            <person name="Hiller N.L."/>
            <person name="Tettelin H."/>
            <person name="Muzzi A."/>
            <person name="Croucher N.J."/>
            <person name="Angiuoli S.V."/>
            <person name="Oggioni M."/>
            <person name="Dunning Hotopp J.C."/>
            <person name="Hu F.Z."/>
            <person name="Riley D.R."/>
            <person name="Covacci A."/>
            <person name="Mitchell T.J."/>
            <person name="Bentley S.D."/>
            <person name="Kilian M."/>
            <person name="Ehrlich G.D."/>
            <person name="Rappuoli R."/>
            <person name="Moxon E.R."/>
            <person name="Masignani V."/>
        </authorList>
    </citation>
    <scope>NUCLEOTIDE SEQUENCE [LARGE SCALE GENOMIC DNA]</scope>
    <source>
        <strain>JJA</strain>
    </source>
</reference>
<protein>
    <recommendedName>
        <fullName evidence="1">2,3-bisphosphoglycerate-dependent phosphoglycerate mutase</fullName>
        <shortName evidence="1">BPG-dependent PGAM</shortName>
        <shortName evidence="1">PGAM</shortName>
        <shortName evidence="1">Phosphoglyceromutase</shortName>
        <shortName evidence="1">dPGM</shortName>
        <ecNumber evidence="1">5.4.2.11</ecNumber>
    </recommendedName>
</protein>
<keyword id="KW-0312">Gluconeogenesis</keyword>
<keyword id="KW-0324">Glycolysis</keyword>
<keyword id="KW-0413">Isomerase</keyword>
<dbReference type="EC" id="5.4.2.11" evidence="1"/>
<dbReference type="EMBL" id="CP000919">
    <property type="protein sequence ID" value="ACO18146.1"/>
    <property type="molecule type" value="Genomic_DNA"/>
</dbReference>
<dbReference type="RefSeq" id="WP_000240129.1">
    <property type="nucleotide sequence ID" value="NC_012466.1"/>
</dbReference>
<dbReference type="SMR" id="C1CFM7"/>
<dbReference type="KEGG" id="sjj:SPJ_1551"/>
<dbReference type="HOGENOM" id="CLU_033323_1_5_9"/>
<dbReference type="UniPathway" id="UPA00109">
    <property type="reaction ID" value="UER00186"/>
</dbReference>
<dbReference type="Proteomes" id="UP000002206">
    <property type="component" value="Chromosome"/>
</dbReference>
<dbReference type="GO" id="GO:0004619">
    <property type="term" value="F:phosphoglycerate mutase activity"/>
    <property type="evidence" value="ECO:0007669"/>
    <property type="project" value="UniProtKB-EC"/>
</dbReference>
<dbReference type="GO" id="GO:0006094">
    <property type="term" value="P:gluconeogenesis"/>
    <property type="evidence" value="ECO:0007669"/>
    <property type="project" value="UniProtKB-UniRule"/>
</dbReference>
<dbReference type="GO" id="GO:0006096">
    <property type="term" value="P:glycolytic process"/>
    <property type="evidence" value="ECO:0007669"/>
    <property type="project" value="UniProtKB-UniRule"/>
</dbReference>
<dbReference type="CDD" id="cd07067">
    <property type="entry name" value="HP_PGM_like"/>
    <property type="match status" value="1"/>
</dbReference>
<dbReference type="FunFam" id="3.40.50.1240:FF:000003">
    <property type="entry name" value="2,3-bisphosphoglycerate-dependent phosphoglycerate mutase"/>
    <property type="match status" value="1"/>
</dbReference>
<dbReference type="Gene3D" id="3.40.50.1240">
    <property type="entry name" value="Phosphoglycerate mutase-like"/>
    <property type="match status" value="1"/>
</dbReference>
<dbReference type="HAMAP" id="MF_01039">
    <property type="entry name" value="PGAM_GpmA"/>
    <property type="match status" value="1"/>
</dbReference>
<dbReference type="InterPro" id="IPR013078">
    <property type="entry name" value="His_Pase_superF_clade-1"/>
</dbReference>
<dbReference type="InterPro" id="IPR029033">
    <property type="entry name" value="His_PPase_superfam"/>
</dbReference>
<dbReference type="InterPro" id="IPR005952">
    <property type="entry name" value="Phosphogly_mut1"/>
</dbReference>
<dbReference type="NCBIfam" id="TIGR01258">
    <property type="entry name" value="pgm_1"/>
    <property type="match status" value="1"/>
</dbReference>
<dbReference type="NCBIfam" id="NF010713">
    <property type="entry name" value="PRK14115.1"/>
    <property type="match status" value="1"/>
</dbReference>
<dbReference type="NCBIfam" id="NF010715">
    <property type="entry name" value="PRK14117.1"/>
    <property type="match status" value="1"/>
</dbReference>
<dbReference type="PANTHER" id="PTHR11931">
    <property type="entry name" value="PHOSPHOGLYCERATE MUTASE"/>
    <property type="match status" value="1"/>
</dbReference>
<dbReference type="Pfam" id="PF00300">
    <property type="entry name" value="His_Phos_1"/>
    <property type="match status" value="1"/>
</dbReference>
<dbReference type="PIRSF" id="PIRSF000709">
    <property type="entry name" value="6PFK_2-Ptase"/>
    <property type="match status" value="1"/>
</dbReference>
<dbReference type="SMART" id="SM00855">
    <property type="entry name" value="PGAM"/>
    <property type="match status" value="1"/>
</dbReference>
<dbReference type="SUPFAM" id="SSF53254">
    <property type="entry name" value="Phosphoglycerate mutase-like"/>
    <property type="match status" value="1"/>
</dbReference>
<gene>
    <name evidence="1" type="primary">gpmA</name>
    <name type="ordered locus">SPJ_1551</name>
</gene>
<organism>
    <name type="scientific">Streptococcus pneumoniae (strain JJA)</name>
    <dbReference type="NCBI Taxonomy" id="488222"/>
    <lineage>
        <taxon>Bacteria</taxon>
        <taxon>Bacillati</taxon>
        <taxon>Bacillota</taxon>
        <taxon>Bacilli</taxon>
        <taxon>Lactobacillales</taxon>
        <taxon>Streptococcaceae</taxon>
        <taxon>Streptococcus</taxon>
    </lineage>
</organism>
<proteinExistence type="inferred from homology"/>